<gene>
    <name type="primary">Elk4</name>
    <name type="synonym">Sap1</name>
</gene>
<protein>
    <recommendedName>
        <fullName>ETS domain-containing protein Elk-4</fullName>
    </recommendedName>
    <alternativeName>
        <fullName>Serum response factor accessory protein 1</fullName>
        <shortName>SAP-1</shortName>
        <shortName>SRF accessory protein 1</shortName>
    </alternativeName>
</protein>
<accession>P41158</accession>
<accession>A6H693</accession>
<evidence type="ECO:0000250" key="1"/>
<evidence type="ECO:0000250" key="2">
    <source>
        <dbReference type="UniProtKB" id="P28324"/>
    </source>
</evidence>
<evidence type="ECO:0000255" key="3">
    <source>
        <dbReference type="PROSITE-ProRule" id="PRU00237"/>
    </source>
</evidence>
<evidence type="ECO:0000256" key="4">
    <source>
        <dbReference type="SAM" id="MobiDB-lite"/>
    </source>
</evidence>
<evidence type="ECO:0000305" key="5"/>
<dbReference type="EMBL" id="Z36885">
    <property type="protein sequence ID" value="CAA85358.1"/>
    <property type="molecule type" value="mRNA"/>
</dbReference>
<dbReference type="EMBL" id="CH466520">
    <property type="protein sequence ID" value="EDL39692.1"/>
    <property type="molecule type" value="Genomic_DNA"/>
</dbReference>
<dbReference type="EMBL" id="BC144844">
    <property type="protein sequence ID" value="AAI44845.1"/>
    <property type="molecule type" value="mRNA"/>
</dbReference>
<dbReference type="EMBL" id="BC145795">
    <property type="protein sequence ID" value="AAI45796.1"/>
    <property type="molecule type" value="mRNA"/>
</dbReference>
<dbReference type="CCDS" id="CCDS35704.1"/>
<dbReference type="PIR" id="I48755">
    <property type="entry name" value="I48755"/>
</dbReference>
<dbReference type="RefSeq" id="NP_001363883.1">
    <property type="nucleotide sequence ID" value="NM_001376954.1"/>
</dbReference>
<dbReference type="RefSeq" id="NP_001363884.1">
    <property type="nucleotide sequence ID" value="NM_001376955.1"/>
</dbReference>
<dbReference type="RefSeq" id="NP_001363885.1">
    <property type="nucleotide sequence ID" value="NM_001376956.1"/>
</dbReference>
<dbReference type="RefSeq" id="NP_001363886.1">
    <property type="nucleotide sequence ID" value="NM_001376957.1"/>
</dbReference>
<dbReference type="RefSeq" id="NP_001363887.1">
    <property type="nucleotide sequence ID" value="NM_001376958.1"/>
</dbReference>
<dbReference type="RefSeq" id="NP_031949.2">
    <property type="nucleotide sequence ID" value="NM_007923.3"/>
</dbReference>
<dbReference type="RefSeq" id="XP_006529189.1">
    <property type="nucleotide sequence ID" value="XM_006529126.3"/>
</dbReference>
<dbReference type="RefSeq" id="XP_006529190.1">
    <property type="nucleotide sequence ID" value="XM_006529127.3"/>
</dbReference>
<dbReference type="RefSeq" id="XP_006529191.1">
    <property type="nucleotide sequence ID" value="XM_006529128.3"/>
</dbReference>
<dbReference type="RefSeq" id="XP_006529192.1">
    <property type="nucleotide sequence ID" value="XM_006529129.3"/>
</dbReference>
<dbReference type="RefSeq" id="XP_006529193.1">
    <property type="nucleotide sequence ID" value="XM_006529130.3"/>
</dbReference>
<dbReference type="RefSeq" id="XP_036014866.1">
    <property type="nucleotide sequence ID" value="XM_036158973.1"/>
</dbReference>
<dbReference type="SMR" id="P41158"/>
<dbReference type="BioGRID" id="199431">
    <property type="interactions" value="1"/>
</dbReference>
<dbReference type="FunCoup" id="P41158">
    <property type="interactions" value="3369"/>
</dbReference>
<dbReference type="STRING" id="10090.ENSMUSP00000083743"/>
<dbReference type="GlyGen" id="P41158">
    <property type="glycosylation" value="1 site"/>
</dbReference>
<dbReference type="iPTMnet" id="P41158"/>
<dbReference type="PhosphoSitePlus" id="P41158"/>
<dbReference type="PaxDb" id="10090-ENSMUSP00000083743"/>
<dbReference type="ProteomicsDB" id="275741"/>
<dbReference type="Antibodypedia" id="20682">
    <property type="antibodies" value="139 antibodies from 25 providers"/>
</dbReference>
<dbReference type="DNASU" id="13714"/>
<dbReference type="Ensembl" id="ENSMUST00000027696.10">
    <property type="protein sequence ID" value="ENSMUSP00000027696.4"/>
    <property type="gene ID" value="ENSMUSG00000026436.16"/>
</dbReference>
<dbReference type="Ensembl" id="ENSMUST00000086556.12">
    <property type="protein sequence ID" value="ENSMUSP00000083743.6"/>
    <property type="gene ID" value="ENSMUSG00000026436.16"/>
</dbReference>
<dbReference type="GeneID" id="13714"/>
<dbReference type="KEGG" id="mmu:13714"/>
<dbReference type="UCSC" id="uc007cob.1">
    <property type="organism name" value="mouse"/>
</dbReference>
<dbReference type="AGR" id="MGI:102853"/>
<dbReference type="CTD" id="2005"/>
<dbReference type="MGI" id="MGI:102853">
    <property type="gene designation" value="Elk4"/>
</dbReference>
<dbReference type="VEuPathDB" id="HostDB:ENSMUSG00000026436"/>
<dbReference type="eggNOG" id="KOG3806">
    <property type="taxonomic scope" value="Eukaryota"/>
</dbReference>
<dbReference type="GeneTree" id="ENSGT00940000158900"/>
<dbReference type="HOGENOM" id="CLU_036905_1_0_1"/>
<dbReference type="InParanoid" id="P41158"/>
<dbReference type="OMA" id="KDVESCG"/>
<dbReference type="OrthoDB" id="10067219at2759"/>
<dbReference type="PhylomeDB" id="P41158"/>
<dbReference type="TreeFam" id="TF317732"/>
<dbReference type="BioGRID-ORCS" id="13714">
    <property type="hits" value="3 hits in 83 CRISPR screens"/>
</dbReference>
<dbReference type="ChiTaRS" id="Elk4">
    <property type="organism name" value="mouse"/>
</dbReference>
<dbReference type="PRO" id="PR:P41158"/>
<dbReference type="Proteomes" id="UP000000589">
    <property type="component" value="Chromosome 1"/>
</dbReference>
<dbReference type="RNAct" id="P41158">
    <property type="molecule type" value="protein"/>
</dbReference>
<dbReference type="Bgee" id="ENSMUSG00000026436">
    <property type="expression patterns" value="Expressed in saccule of membranous labyrinth and 256 other cell types or tissues"/>
</dbReference>
<dbReference type="ExpressionAtlas" id="P41158">
    <property type="expression patterns" value="baseline and differential"/>
</dbReference>
<dbReference type="GO" id="GO:0005829">
    <property type="term" value="C:cytosol"/>
    <property type="evidence" value="ECO:0007669"/>
    <property type="project" value="Ensembl"/>
</dbReference>
<dbReference type="GO" id="GO:0005654">
    <property type="term" value="C:nucleoplasm"/>
    <property type="evidence" value="ECO:0007669"/>
    <property type="project" value="Ensembl"/>
</dbReference>
<dbReference type="GO" id="GO:0003682">
    <property type="term" value="F:chromatin binding"/>
    <property type="evidence" value="ECO:0000250"/>
    <property type="project" value="UniProtKB"/>
</dbReference>
<dbReference type="GO" id="GO:0001228">
    <property type="term" value="F:DNA-binding transcription activator activity, RNA polymerase II-specific"/>
    <property type="evidence" value="ECO:0007669"/>
    <property type="project" value="Ensembl"/>
</dbReference>
<dbReference type="GO" id="GO:0000978">
    <property type="term" value="F:RNA polymerase II cis-regulatory region sequence-specific DNA binding"/>
    <property type="evidence" value="ECO:0007669"/>
    <property type="project" value="Ensembl"/>
</dbReference>
<dbReference type="GO" id="GO:0000122">
    <property type="term" value="P:negative regulation of transcription by RNA polymerase II"/>
    <property type="evidence" value="ECO:0000250"/>
    <property type="project" value="UniProtKB"/>
</dbReference>
<dbReference type="FunFam" id="1.10.10.10:FF:000113">
    <property type="entry name" value="ETS domain-containing protein Elk-3"/>
    <property type="match status" value="1"/>
</dbReference>
<dbReference type="Gene3D" id="1.10.10.10">
    <property type="entry name" value="Winged helix-like DNA-binding domain superfamily/Winged helix DNA-binding domain"/>
    <property type="match status" value="1"/>
</dbReference>
<dbReference type="InterPro" id="IPR000418">
    <property type="entry name" value="Ets_dom"/>
</dbReference>
<dbReference type="InterPro" id="IPR046328">
    <property type="entry name" value="ETS_fam"/>
</dbReference>
<dbReference type="InterPro" id="IPR036388">
    <property type="entry name" value="WH-like_DNA-bd_sf"/>
</dbReference>
<dbReference type="InterPro" id="IPR036390">
    <property type="entry name" value="WH_DNA-bd_sf"/>
</dbReference>
<dbReference type="PANTHER" id="PTHR11849">
    <property type="entry name" value="ETS"/>
    <property type="match status" value="1"/>
</dbReference>
<dbReference type="PANTHER" id="PTHR11849:SF21">
    <property type="entry name" value="ETS DOMAIN-CONTAINING PROTEIN ELK-4"/>
    <property type="match status" value="1"/>
</dbReference>
<dbReference type="Pfam" id="PF00178">
    <property type="entry name" value="Ets"/>
    <property type="match status" value="1"/>
</dbReference>
<dbReference type="PRINTS" id="PR00454">
    <property type="entry name" value="ETSDOMAIN"/>
</dbReference>
<dbReference type="SMART" id="SM00413">
    <property type="entry name" value="ETS"/>
    <property type="match status" value="1"/>
</dbReference>
<dbReference type="SUPFAM" id="SSF46785">
    <property type="entry name" value="Winged helix' DNA-binding domain"/>
    <property type="match status" value="1"/>
</dbReference>
<dbReference type="PROSITE" id="PS00345">
    <property type="entry name" value="ETS_DOMAIN_1"/>
    <property type="match status" value="1"/>
</dbReference>
<dbReference type="PROSITE" id="PS00346">
    <property type="entry name" value="ETS_DOMAIN_2"/>
    <property type="match status" value="1"/>
</dbReference>
<dbReference type="PROSITE" id="PS50061">
    <property type="entry name" value="ETS_DOMAIN_3"/>
    <property type="match status" value="1"/>
</dbReference>
<organism>
    <name type="scientific">Mus musculus</name>
    <name type="common">Mouse</name>
    <dbReference type="NCBI Taxonomy" id="10090"/>
    <lineage>
        <taxon>Eukaryota</taxon>
        <taxon>Metazoa</taxon>
        <taxon>Chordata</taxon>
        <taxon>Craniata</taxon>
        <taxon>Vertebrata</taxon>
        <taxon>Euteleostomi</taxon>
        <taxon>Mammalia</taxon>
        <taxon>Eutheria</taxon>
        <taxon>Euarchontoglires</taxon>
        <taxon>Glires</taxon>
        <taxon>Rodentia</taxon>
        <taxon>Myomorpha</taxon>
        <taxon>Muroidea</taxon>
        <taxon>Muridae</taxon>
        <taxon>Murinae</taxon>
        <taxon>Mus</taxon>
        <taxon>Mus</taxon>
    </lineage>
</organism>
<sequence length="430" mass="46826">MDSAITLWQFLLQLLQEPQNEHMICWTSNNGEFKLLQAEEVARLWGIRKNKPNMNYDKLSRALRYYYVKNIIKKVNGQKFVYKFVSYPEILKMDPLTVGRIEGDCEALNSIETSSSKDVEYGGKERPPQPGAKTSSRNDYIHSGLYSSFTLNSLNTSNKKLFKSIKIENPAEKLAEKKAQEPTPSVIKFVTTPAKKPPIEPVAAAFATSPSLSPSSEETIQALETLVSPTLPSLETPASISILATTFNPTPPVPSTPLPLKEPPRTPSPPLSSNPDIDTDIESVASQPMELPENLSLEPKNEDSALPEKDKTNNSSRSKKPKGLELTPALVVTGSDPSPLGILSPSLPTASLTPALFSQTPILLTPSPLLSSIHFWSTLSPFAPLSPARLQGANTLFQFPSVLNSHGPFTLSGLDGPSTPGPFSPDLQKT</sequence>
<proteinExistence type="evidence at transcript level"/>
<keyword id="KW-0010">Activator</keyword>
<keyword id="KW-0238">DNA-binding</keyword>
<keyword id="KW-1017">Isopeptide bond</keyword>
<keyword id="KW-0539">Nucleus</keyword>
<keyword id="KW-1185">Reference proteome</keyword>
<keyword id="KW-0678">Repressor</keyword>
<keyword id="KW-0804">Transcription</keyword>
<keyword id="KW-0805">Transcription regulation</keyword>
<keyword id="KW-0832">Ubl conjugation</keyword>
<reference key="1">
    <citation type="journal article" date="1994" name="Genes Dev.">
        <title>Net, a new ets transcription factor that is activated by Ras.</title>
        <authorList>
            <person name="Giovane A."/>
            <person name="Pintzas A."/>
            <person name="Maira S.-M."/>
            <person name="Sobieszczuk P."/>
            <person name="Wasylyk B."/>
        </authorList>
    </citation>
    <scope>NUCLEOTIDE SEQUENCE [MRNA]</scope>
    <source>
        <tissue>Embryo</tissue>
    </source>
</reference>
<reference key="2">
    <citation type="submission" date="2005-09" db="EMBL/GenBank/DDBJ databases">
        <authorList>
            <person name="Mural R.J."/>
            <person name="Adams M.D."/>
            <person name="Myers E.W."/>
            <person name="Smith H.O."/>
            <person name="Venter J.C."/>
        </authorList>
    </citation>
    <scope>NUCLEOTIDE SEQUENCE [LARGE SCALE GENOMIC DNA]</scope>
</reference>
<reference key="3">
    <citation type="journal article" date="2004" name="Genome Res.">
        <title>The status, quality, and expansion of the NIH full-length cDNA project: the Mammalian Gene Collection (MGC).</title>
        <authorList>
            <consortium name="The MGC Project Team"/>
        </authorList>
    </citation>
    <scope>NUCLEOTIDE SEQUENCE [LARGE SCALE MRNA]</scope>
    <source>
        <tissue>Brain</tissue>
    </source>
</reference>
<name>ELK4_MOUSE</name>
<comment type="function">
    <text evidence="1">Involved in both transcriptional activation and repression. Interaction with SIRT7 leads to recruitment and stabilization of SIRT7 at promoters, followed by deacetylation of histone H3 at 'Lys-18' (H3K18Ac) and subsequent transcription repression. Forms a ternary complex with the serum response factor (SRF). Requires DNA-bound SRF for ternary complex formation and makes extensive DNA contacts to the 5'side of SRF, but does not bind DNA autonomously (By similarity).</text>
</comment>
<comment type="subunit">
    <text evidence="1">Interacts with SIRT7.</text>
</comment>
<comment type="subcellular location">
    <subcellularLocation>
        <location>Nucleus</location>
    </subcellularLocation>
</comment>
<comment type="tissue specificity">
    <text>Lung and liver.</text>
</comment>
<comment type="similarity">
    <text evidence="5">Belongs to the ETS family.</text>
</comment>
<feature type="chain" id="PRO_0000204100" description="ETS domain-containing protein Elk-4">
    <location>
        <begin position="1"/>
        <end position="430"/>
    </location>
</feature>
<feature type="DNA-binding region" description="ETS" evidence="3">
    <location>
        <begin position="5"/>
        <end position="85"/>
    </location>
</feature>
<feature type="region of interest" description="Disordered" evidence="4">
    <location>
        <begin position="116"/>
        <end position="138"/>
    </location>
</feature>
<feature type="region of interest" description="Disordered" evidence="4">
    <location>
        <begin position="245"/>
        <end position="279"/>
    </location>
</feature>
<feature type="region of interest" description="Disordered" evidence="4">
    <location>
        <begin position="292"/>
        <end position="325"/>
    </location>
</feature>
<feature type="compositionally biased region" description="Basic and acidic residues" evidence="4">
    <location>
        <begin position="116"/>
        <end position="127"/>
    </location>
</feature>
<feature type="compositionally biased region" description="Pro residues" evidence="4">
    <location>
        <begin position="249"/>
        <end position="272"/>
    </location>
</feature>
<feature type="compositionally biased region" description="Basic and acidic residues" evidence="4">
    <location>
        <begin position="299"/>
        <end position="312"/>
    </location>
</feature>
<feature type="cross-link" description="Glycyl lysine isopeptide (Lys-Gly) (interchain with G-Cter in SUMO2)" evidence="2">
    <location>
        <position position="166"/>
    </location>
</feature>
<feature type="sequence conflict" description="In Ref. 1; CAA85358." evidence="5" ref="1">
    <original>G</original>
    <variation>A</variation>
    <location>
        <position position="99"/>
    </location>
</feature>
<feature type="sequence conflict" description="In Ref. 1; CAA85358." evidence="5" ref="1">
    <original>F</original>
    <variation>C</variation>
    <location>
        <position position="206"/>
    </location>
</feature>
<feature type="sequence conflict" description="In Ref. 1; CAA85358." evidence="5" ref="1">
    <original>S</original>
    <variation>F</variation>
    <location>
        <position position="228"/>
    </location>
</feature>
<feature type="sequence conflict" description="In Ref. 1; CAA85358." evidence="5" ref="1">
    <original>P</original>
    <variation>A</variation>
    <location>
        <position position="307"/>
    </location>
</feature>
<feature type="sequence conflict" description="In Ref. 1; CAA85358." evidence="5" ref="1">
    <original>L</original>
    <variation>S</variation>
    <location>
        <position position="340"/>
    </location>
</feature>
<feature type="sequence conflict" description="In Ref. 1; CAA85358." evidence="5" ref="1">
    <original>T</original>
    <variation>M</variation>
    <location>
        <position position="395"/>
    </location>
</feature>
<feature type="sequence conflict" description="In Ref. 1; CAA85358." evidence="5" ref="1">
    <original>F</original>
    <variation>L</variation>
    <location>
        <position position="409"/>
    </location>
</feature>
<feature type="sequence conflict" description="In Ref. 1; CAA85358." evidence="5" ref="1">
    <original>D</original>
    <variation>E</variation>
    <location>
        <position position="415"/>
    </location>
</feature>
<feature type="sequence conflict" description="In Ref. 1; CAA85358." evidence="5" ref="1">
    <original>T</original>
    <variation>L</variation>
    <location>
        <position position="419"/>
    </location>
</feature>
<feature type="sequence conflict" description="In Ref. 1; CAA85358." evidence="5" ref="1">
    <original>D</original>
    <variation>R</variation>
    <location>
        <position position="426"/>
    </location>
</feature>